<sequence length="75" mass="8747">MASQDDPVQREIHQDWANREYIEVITSSIKKIADFLNSFDMSCRSRLATLNEKLTALERRIEYIEARVTKGETLT</sequence>
<proteinExistence type="inferred from homology"/>
<reference key="1">
    <citation type="submission" date="2003-11" db="EMBL/GenBank/DDBJ databases">
        <authorList>
            <consortium name="NIH - Xenopus Gene Collection (XGC) project"/>
        </authorList>
    </citation>
    <scope>NUCLEOTIDE SEQUENCE [LARGE SCALE MRNA]</scope>
    <source>
        <tissue>Lung</tissue>
    </source>
</reference>
<name>BRK1A_XENLA</name>
<organism>
    <name type="scientific">Xenopus laevis</name>
    <name type="common">African clawed frog</name>
    <dbReference type="NCBI Taxonomy" id="8355"/>
    <lineage>
        <taxon>Eukaryota</taxon>
        <taxon>Metazoa</taxon>
        <taxon>Chordata</taxon>
        <taxon>Craniata</taxon>
        <taxon>Vertebrata</taxon>
        <taxon>Euteleostomi</taxon>
        <taxon>Amphibia</taxon>
        <taxon>Batrachia</taxon>
        <taxon>Anura</taxon>
        <taxon>Pipoidea</taxon>
        <taxon>Pipidae</taxon>
        <taxon>Xenopodinae</taxon>
        <taxon>Xenopus</taxon>
        <taxon>Xenopus</taxon>
    </lineage>
</organism>
<accession>Q6P7G6</accession>
<keyword id="KW-0175">Coiled coil</keyword>
<keyword id="KW-0963">Cytoplasm</keyword>
<keyword id="KW-0206">Cytoskeleton</keyword>
<keyword id="KW-1185">Reference proteome</keyword>
<evidence type="ECO:0000250" key="1"/>
<evidence type="ECO:0000255" key="2"/>
<evidence type="ECO:0000305" key="3"/>
<comment type="function">
    <text evidence="1">Involved in regulation of actin and microtubule organization. Part of a WAVE complex that activates the Arp2/3 complex (By similarity).</text>
</comment>
<comment type="subcellular location">
    <subcellularLocation>
        <location evidence="1">Cytoplasm</location>
        <location evidence="1">Cytoskeleton</location>
    </subcellularLocation>
</comment>
<comment type="similarity">
    <text evidence="3">Belongs to the BRK1 family.</text>
</comment>
<gene>
    <name type="primary">brk1-a</name>
</gene>
<feature type="chain" id="PRO_0000283650" description="Probable protein BRICK1-A">
    <location>
        <begin position="1"/>
        <end position="75"/>
    </location>
</feature>
<feature type="coiled-coil region" evidence="2">
    <location>
        <begin position="41"/>
        <end position="72"/>
    </location>
</feature>
<dbReference type="EMBL" id="BC061677">
    <property type="protein sequence ID" value="AAH61677.1"/>
    <property type="molecule type" value="mRNA"/>
</dbReference>
<dbReference type="RefSeq" id="NP_001165164.1">
    <property type="nucleotide sequence ID" value="NM_001171693.1"/>
</dbReference>
<dbReference type="SMR" id="Q6P7G6"/>
<dbReference type="DNASU" id="399042"/>
<dbReference type="GeneID" id="399042"/>
<dbReference type="KEGG" id="xla:399042"/>
<dbReference type="AGR" id="Xenbase:XB-GENE-6254645"/>
<dbReference type="CTD" id="399042"/>
<dbReference type="Xenbase" id="XB-GENE-6254645">
    <property type="gene designation" value="brk1.L"/>
</dbReference>
<dbReference type="OrthoDB" id="1883432at2759"/>
<dbReference type="Proteomes" id="UP000186698">
    <property type="component" value="Chromosome 4L"/>
</dbReference>
<dbReference type="Bgee" id="399042">
    <property type="expression patterns" value="Expressed in lung and 19 other cell types or tissues"/>
</dbReference>
<dbReference type="GO" id="GO:0005856">
    <property type="term" value="C:cytoskeleton"/>
    <property type="evidence" value="ECO:0007669"/>
    <property type="project" value="UniProtKB-SubCell"/>
</dbReference>
<dbReference type="GO" id="GO:0031209">
    <property type="term" value="C:SCAR complex"/>
    <property type="evidence" value="ECO:0000318"/>
    <property type="project" value="GO_Central"/>
</dbReference>
<dbReference type="GO" id="GO:0044877">
    <property type="term" value="F:protein-containing complex binding"/>
    <property type="evidence" value="ECO:0007669"/>
    <property type="project" value="InterPro"/>
</dbReference>
<dbReference type="GO" id="GO:0007015">
    <property type="term" value="P:actin filament organization"/>
    <property type="evidence" value="ECO:0007669"/>
    <property type="project" value="InterPro"/>
</dbReference>
<dbReference type="GO" id="GO:0048870">
    <property type="term" value="P:cell motility"/>
    <property type="evidence" value="ECO:0000318"/>
    <property type="project" value="GO_Central"/>
</dbReference>
<dbReference type="GO" id="GO:0008064">
    <property type="term" value="P:regulation of actin polymerization or depolymerization"/>
    <property type="evidence" value="ECO:0000318"/>
    <property type="project" value="GO_Central"/>
</dbReference>
<dbReference type="FunFam" id="1.20.5.110:FF:000017">
    <property type="entry name" value="BRICK1, SCAR/WAVE actin-nucleating complex subunit"/>
    <property type="match status" value="1"/>
</dbReference>
<dbReference type="Gene3D" id="1.20.5.110">
    <property type="match status" value="1"/>
</dbReference>
<dbReference type="InterPro" id="IPR033378">
    <property type="entry name" value="BRICK1"/>
</dbReference>
<dbReference type="PANTHER" id="PTHR33668">
    <property type="entry name" value="PROTEIN BRICK1"/>
    <property type="match status" value="1"/>
</dbReference>
<dbReference type="PANTHER" id="PTHR33668:SF1">
    <property type="entry name" value="PROTEIN BRICK1"/>
    <property type="match status" value="1"/>
</dbReference>
<protein>
    <recommendedName>
        <fullName>Probable protein BRICK1-A</fullName>
    </recommendedName>
</protein>